<reference key="1">
    <citation type="journal article" date="2007" name="PLoS ONE">
        <title>Analysis of the neurotoxin complex genes in Clostridium botulinum A1-A4 and B1 strains: BoNT/A3, /Ba4 and /B1 clusters are located within plasmids.</title>
        <authorList>
            <person name="Smith T.J."/>
            <person name="Hill K.K."/>
            <person name="Foley B.T."/>
            <person name="Detter J.C."/>
            <person name="Munk A.C."/>
            <person name="Bruce D.C."/>
            <person name="Doggett N.A."/>
            <person name="Smith L.A."/>
            <person name="Marks J.D."/>
            <person name="Xie G."/>
            <person name="Brettin T.S."/>
        </authorList>
    </citation>
    <scope>NUCLEOTIDE SEQUENCE [LARGE SCALE GENOMIC DNA]</scope>
    <source>
        <strain>Okra / Type B1</strain>
    </source>
</reference>
<dbReference type="EMBL" id="CP000939">
    <property type="protein sequence ID" value="ACA44175.1"/>
    <property type="molecule type" value="Genomic_DNA"/>
</dbReference>
<dbReference type="RefSeq" id="WP_003405058.1">
    <property type="nucleotide sequence ID" value="NC_010516.1"/>
</dbReference>
<dbReference type="SMR" id="B1IE31"/>
<dbReference type="KEGG" id="cbb:CLD_0632"/>
<dbReference type="HOGENOM" id="CLU_085114_4_0_9"/>
<dbReference type="Proteomes" id="UP000008541">
    <property type="component" value="Chromosome"/>
</dbReference>
<dbReference type="GO" id="GO:0005886">
    <property type="term" value="C:plasma membrane"/>
    <property type="evidence" value="ECO:0007669"/>
    <property type="project" value="UniProtKB-SubCell"/>
</dbReference>
<dbReference type="GO" id="GO:0045259">
    <property type="term" value="C:proton-transporting ATP synthase complex"/>
    <property type="evidence" value="ECO:0007669"/>
    <property type="project" value="UniProtKB-KW"/>
</dbReference>
<dbReference type="GO" id="GO:0046933">
    <property type="term" value="F:proton-transporting ATP synthase activity, rotational mechanism"/>
    <property type="evidence" value="ECO:0007669"/>
    <property type="project" value="UniProtKB-UniRule"/>
</dbReference>
<dbReference type="Gene3D" id="1.10.520.20">
    <property type="entry name" value="N-terminal domain of the delta subunit of the F1F0-ATP synthase"/>
    <property type="match status" value="1"/>
</dbReference>
<dbReference type="HAMAP" id="MF_01416">
    <property type="entry name" value="ATP_synth_delta_bact"/>
    <property type="match status" value="1"/>
</dbReference>
<dbReference type="InterPro" id="IPR026015">
    <property type="entry name" value="ATP_synth_OSCP/delta_N_sf"/>
</dbReference>
<dbReference type="InterPro" id="IPR020781">
    <property type="entry name" value="ATPase_OSCP/d_CS"/>
</dbReference>
<dbReference type="InterPro" id="IPR000711">
    <property type="entry name" value="ATPase_OSCP/dsu"/>
</dbReference>
<dbReference type="NCBIfam" id="TIGR01145">
    <property type="entry name" value="ATP_synt_delta"/>
    <property type="match status" value="1"/>
</dbReference>
<dbReference type="NCBIfam" id="NF004403">
    <property type="entry name" value="PRK05758.2-4"/>
    <property type="match status" value="1"/>
</dbReference>
<dbReference type="PANTHER" id="PTHR11910">
    <property type="entry name" value="ATP SYNTHASE DELTA CHAIN"/>
    <property type="match status" value="1"/>
</dbReference>
<dbReference type="Pfam" id="PF00213">
    <property type="entry name" value="OSCP"/>
    <property type="match status" value="1"/>
</dbReference>
<dbReference type="PRINTS" id="PR00125">
    <property type="entry name" value="ATPASEDELTA"/>
</dbReference>
<dbReference type="SUPFAM" id="SSF47928">
    <property type="entry name" value="N-terminal domain of the delta subunit of the F1F0-ATP synthase"/>
    <property type="match status" value="1"/>
</dbReference>
<dbReference type="SUPFAM" id="SSF160527">
    <property type="entry name" value="V-type ATPase subunit E-like"/>
    <property type="match status" value="1"/>
</dbReference>
<dbReference type="PROSITE" id="PS00389">
    <property type="entry name" value="ATPASE_DELTA"/>
    <property type="match status" value="1"/>
</dbReference>
<name>ATPD_CLOBK</name>
<organism>
    <name type="scientific">Clostridium botulinum (strain Okra / Type B1)</name>
    <dbReference type="NCBI Taxonomy" id="498213"/>
    <lineage>
        <taxon>Bacteria</taxon>
        <taxon>Bacillati</taxon>
        <taxon>Bacillota</taxon>
        <taxon>Clostridia</taxon>
        <taxon>Eubacteriales</taxon>
        <taxon>Clostridiaceae</taxon>
        <taxon>Clostridium</taxon>
    </lineage>
</organism>
<gene>
    <name evidence="1" type="primary">atpH</name>
    <name type="ordered locus">CLD_0632</name>
</gene>
<proteinExistence type="inferred from homology"/>
<protein>
    <recommendedName>
        <fullName evidence="1">ATP synthase subunit delta</fullName>
    </recommendedName>
    <alternativeName>
        <fullName evidence="1">ATP synthase F(1) sector subunit delta</fullName>
    </alternativeName>
    <alternativeName>
        <fullName evidence="1">F-type ATPase subunit delta</fullName>
        <shortName evidence="1">F-ATPase subunit delta</shortName>
    </alternativeName>
</protein>
<feature type="chain" id="PRO_1000184674" description="ATP synthase subunit delta">
    <location>
        <begin position="1"/>
        <end position="179"/>
    </location>
</feature>
<keyword id="KW-0066">ATP synthesis</keyword>
<keyword id="KW-1003">Cell membrane</keyword>
<keyword id="KW-0139">CF(1)</keyword>
<keyword id="KW-0375">Hydrogen ion transport</keyword>
<keyword id="KW-0406">Ion transport</keyword>
<keyword id="KW-0472">Membrane</keyword>
<keyword id="KW-0813">Transport</keyword>
<evidence type="ECO:0000255" key="1">
    <source>
        <dbReference type="HAMAP-Rule" id="MF_01416"/>
    </source>
</evidence>
<sequence>MYEYLDRRYALALYEVAEENNKVDEYLRDLKEVVNIIKNSEDICKILKHPEINTSRKKEIFTELFKDKVDDKILSFLLVLIEKDRILYLEEKLKEMEKIYLEKNNMILANVKTVIPLLKEEREELIEKLGNKYNKKIILEEEIDKSIIGGVYVRVGDDVLDGTLSTRLKDIKKMMLKRE</sequence>
<accession>B1IE31</accession>
<comment type="function">
    <text evidence="1">F(1)F(0) ATP synthase produces ATP from ADP in the presence of a proton or sodium gradient. F-type ATPases consist of two structural domains, F(1) containing the extramembraneous catalytic core and F(0) containing the membrane proton channel, linked together by a central stalk and a peripheral stalk. During catalysis, ATP synthesis in the catalytic domain of F(1) is coupled via a rotary mechanism of the central stalk subunits to proton translocation.</text>
</comment>
<comment type="function">
    <text evidence="1">This protein is part of the stalk that links CF(0) to CF(1). It either transmits conformational changes from CF(0) to CF(1) or is implicated in proton conduction.</text>
</comment>
<comment type="subunit">
    <text evidence="1">F-type ATPases have 2 components, F(1) - the catalytic core - and F(0) - the membrane proton channel. F(1) has five subunits: alpha(3), beta(3), gamma(1), delta(1), epsilon(1). F(0) has three main subunits: a(1), b(2) and c(10-14). The alpha and beta chains form an alternating ring which encloses part of the gamma chain. F(1) is attached to F(0) by a central stalk formed by the gamma and epsilon chains, while a peripheral stalk is formed by the delta and b chains.</text>
</comment>
<comment type="subcellular location">
    <subcellularLocation>
        <location evidence="1">Cell membrane</location>
        <topology evidence="1">Peripheral membrane protein</topology>
    </subcellularLocation>
</comment>
<comment type="similarity">
    <text evidence="1">Belongs to the ATPase delta chain family.</text>
</comment>